<gene>
    <name evidence="1" type="primary">uvrC</name>
    <name type="ordered locus">Strop_3109</name>
</gene>
<keyword id="KW-0963">Cytoplasm</keyword>
<keyword id="KW-0227">DNA damage</keyword>
<keyword id="KW-0228">DNA excision</keyword>
<keyword id="KW-0234">DNA repair</keyword>
<keyword id="KW-0267">Excision nuclease</keyword>
<keyword id="KW-1185">Reference proteome</keyword>
<keyword id="KW-0742">SOS response</keyword>
<reference key="1">
    <citation type="journal article" date="2007" name="Proc. Natl. Acad. Sci. U.S.A.">
        <title>Genome sequencing reveals complex secondary metabolome in the marine actinomycete Salinispora tropica.</title>
        <authorList>
            <person name="Udwary D.W."/>
            <person name="Zeigler L."/>
            <person name="Asolkar R.N."/>
            <person name="Singan V."/>
            <person name="Lapidus A."/>
            <person name="Fenical W."/>
            <person name="Jensen P.R."/>
            <person name="Moore B.S."/>
        </authorList>
    </citation>
    <scope>NUCLEOTIDE SEQUENCE [LARGE SCALE GENOMIC DNA]</scope>
    <source>
        <strain>ATCC BAA-916 / DSM 44818 / JCM 13857 / NBRC 105044 / CNB-440</strain>
    </source>
</reference>
<name>UVRC_SALTO</name>
<proteinExistence type="inferred from homology"/>
<dbReference type="EMBL" id="CP000667">
    <property type="protein sequence ID" value="ABP55545.1"/>
    <property type="molecule type" value="Genomic_DNA"/>
</dbReference>
<dbReference type="RefSeq" id="WP_012014322.1">
    <property type="nucleotide sequence ID" value="NC_009380.1"/>
</dbReference>
<dbReference type="SMR" id="A4X9H1"/>
<dbReference type="STRING" id="369723.Strop_3109"/>
<dbReference type="KEGG" id="stp:Strop_3109"/>
<dbReference type="PATRIC" id="fig|369723.5.peg.3200"/>
<dbReference type="eggNOG" id="COG0322">
    <property type="taxonomic scope" value="Bacteria"/>
</dbReference>
<dbReference type="HOGENOM" id="CLU_014841_2_0_11"/>
<dbReference type="Proteomes" id="UP000000235">
    <property type="component" value="Chromosome"/>
</dbReference>
<dbReference type="GO" id="GO:0005737">
    <property type="term" value="C:cytoplasm"/>
    <property type="evidence" value="ECO:0007669"/>
    <property type="project" value="UniProtKB-SubCell"/>
</dbReference>
<dbReference type="GO" id="GO:0009380">
    <property type="term" value="C:excinuclease repair complex"/>
    <property type="evidence" value="ECO:0007669"/>
    <property type="project" value="InterPro"/>
</dbReference>
<dbReference type="GO" id="GO:0003677">
    <property type="term" value="F:DNA binding"/>
    <property type="evidence" value="ECO:0007669"/>
    <property type="project" value="UniProtKB-UniRule"/>
</dbReference>
<dbReference type="GO" id="GO:0009381">
    <property type="term" value="F:excinuclease ABC activity"/>
    <property type="evidence" value="ECO:0007669"/>
    <property type="project" value="UniProtKB-UniRule"/>
</dbReference>
<dbReference type="GO" id="GO:0006289">
    <property type="term" value="P:nucleotide-excision repair"/>
    <property type="evidence" value="ECO:0007669"/>
    <property type="project" value="UniProtKB-UniRule"/>
</dbReference>
<dbReference type="GO" id="GO:0009432">
    <property type="term" value="P:SOS response"/>
    <property type="evidence" value="ECO:0007669"/>
    <property type="project" value="UniProtKB-UniRule"/>
</dbReference>
<dbReference type="CDD" id="cd10434">
    <property type="entry name" value="GIY-YIG_UvrC_Cho"/>
    <property type="match status" value="1"/>
</dbReference>
<dbReference type="FunFam" id="1.10.150.20:FF:000005">
    <property type="entry name" value="UvrABC system protein C"/>
    <property type="match status" value="1"/>
</dbReference>
<dbReference type="FunFam" id="3.40.1440.10:FF:000001">
    <property type="entry name" value="UvrABC system protein C"/>
    <property type="match status" value="1"/>
</dbReference>
<dbReference type="Gene3D" id="1.10.150.20">
    <property type="entry name" value="5' to 3' exonuclease, C-terminal subdomain"/>
    <property type="match status" value="1"/>
</dbReference>
<dbReference type="Gene3D" id="3.40.1440.10">
    <property type="entry name" value="GIY-YIG endonuclease"/>
    <property type="match status" value="1"/>
</dbReference>
<dbReference type="Gene3D" id="4.10.860.10">
    <property type="entry name" value="UVR domain"/>
    <property type="match status" value="1"/>
</dbReference>
<dbReference type="Gene3D" id="3.30.420.340">
    <property type="entry name" value="UvrC, RNAse H endonuclease domain"/>
    <property type="match status" value="1"/>
</dbReference>
<dbReference type="HAMAP" id="MF_00203">
    <property type="entry name" value="UvrC"/>
    <property type="match status" value="1"/>
</dbReference>
<dbReference type="InterPro" id="IPR000305">
    <property type="entry name" value="GIY-YIG_endonuc"/>
</dbReference>
<dbReference type="InterPro" id="IPR035901">
    <property type="entry name" value="GIY-YIG_endonuc_sf"/>
</dbReference>
<dbReference type="InterPro" id="IPR047296">
    <property type="entry name" value="GIY-YIG_UvrC_Cho"/>
</dbReference>
<dbReference type="InterPro" id="IPR003583">
    <property type="entry name" value="Hlx-hairpin-Hlx_DNA-bd_motif"/>
</dbReference>
<dbReference type="InterPro" id="IPR010994">
    <property type="entry name" value="RuvA_2-like"/>
</dbReference>
<dbReference type="InterPro" id="IPR001943">
    <property type="entry name" value="UVR_dom"/>
</dbReference>
<dbReference type="InterPro" id="IPR036876">
    <property type="entry name" value="UVR_dom_sf"/>
</dbReference>
<dbReference type="InterPro" id="IPR050066">
    <property type="entry name" value="UvrABC_protein_C"/>
</dbReference>
<dbReference type="InterPro" id="IPR004791">
    <property type="entry name" value="UvrC"/>
</dbReference>
<dbReference type="InterPro" id="IPR001162">
    <property type="entry name" value="UvrC_RNase_H_dom"/>
</dbReference>
<dbReference type="InterPro" id="IPR038476">
    <property type="entry name" value="UvrC_RNase_H_dom_sf"/>
</dbReference>
<dbReference type="NCBIfam" id="NF001824">
    <property type="entry name" value="PRK00558.1-5"/>
    <property type="match status" value="1"/>
</dbReference>
<dbReference type="NCBIfam" id="TIGR00194">
    <property type="entry name" value="uvrC"/>
    <property type="match status" value="1"/>
</dbReference>
<dbReference type="PANTHER" id="PTHR30562:SF1">
    <property type="entry name" value="UVRABC SYSTEM PROTEIN C"/>
    <property type="match status" value="1"/>
</dbReference>
<dbReference type="PANTHER" id="PTHR30562">
    <property type="entry name" value="UVRC/OXIDOREDUCTASE"/>
    <property type="match status" value="1"/>
</dbReference>
<dbReference type="Pfam" id="PF01541">
    <property type="entry name" value="GIY-YIG"/>
    <property type="match status" value="1"/>
</dbReference>
<dbReference type="Pfam" id="PF14520">
    <property type="entry name" value="HHH_5"/>
    <property type="match status" value="1"/>
</dbReference>
<dbReference type="Pfam" id="PF02151">
    <property type="entry name" value="UVR"/>
    <property type="match status" value="1"/>
</dbReference>
<dbReference type="Pfam" id="PF22920">
    <property type="entry name" value="UvrC_RNaseH"/>
    <property type="match status" value="1"/>
</dbReference>
<dbReference type="Pfam" id="PF08459">
    <property type="entry name" value="UvrC_RNaseH_dom"/>
    <property type="match status" value="1"/>
</dbReference>
<dbReference type="SMART" id="SM00465">
    <property type="entry name" value="GIYc"/>
    <property type="match status" value="1"/>
</dbReference>
<dbReference type="SMART" id="SM00278">
    <property type="entry name" value="HhH1"/>
    <property type="match status" value="2"/>
</dbReference>
<dbReference type="SUPFAM" id="SSF46600">
    <property type="entry name" value="C-terminal UvrC-binding domain of UvrB"/>
    <property type="match status" value="1"/>
</dbReference>
<dbReference type="SUPFAM" id="SSF82771">
    <property type="entry name" value="GIY-YIG endonuclease"/>
    <property type="match status" value="1"/>
</dbReference>
<dbReference type="SUPFAM" id="SSF47781">
    <property type="entry name" value="RuvA domain 2-like"/>
    <property type="match status" value="1"/>
</dbReference>
<dbReference type="PROSITE" id="PS50164">
    <property type="entry name" value="GIY_YIG"/>
    <property type="match status" value="1"/>
</dbReference>
<dbReference type="PROSITE" id="PS50151">
    <property type="entry name" value="UVR"/>
    <property type="match status" value="1"/>
</dbReference>
<dbReference type="PROSITE" id="PS50165">
    <property type="entry name" value="UVRC"/>
    <property type="match status" value="1"/>
</dbReference>
<comment type="function">
    <text evidence="1">The UvrABC repair system catalyzes the recognition and processing of DNA lesions. UvrC both incises the 5' and 3' sides of the lesion. The N-terminal half is responsible for the 3' incision and the C-terminal half is responsible for the 5' incision.</text>
</comment>
<comment type="subunit">
    <text evidence="1">Interacts with UvrB in an incision complex.</text>
</comment>
<comment type="subcellular location">
    <subcellularLocation>
        <location evidence="1">Cytoplasm</location>
    </subcellularLocation>
</comment>
<comment type="similarity">
    <text evidence="1">Belongs to the UvrC family.</text>
</comment>
<evidence type="ECO:0000255" key="1">
    <source>
        <dbReference type="HAMAP-Rule" id="MF_00203"/>
    </source>
</evidence>
<evidence type="ECO:0000256" key="2">
    <source>
        <dbReference type="SAM" id="MobiDB-lite"/>
    </source>
</evidence>
<feature type="chain" id="PRO_1000077832" description="UvrABC system protein C">
    <location>
        <begin position="1"/>
        <end position="665"/>
    </location>
</feature>
<feature type="domain" description="GIY-YIG" evidence="1">
    <location>
        <begin position="16"/>
        <end position="95"/>
    </location>
</feature>
<feature type="domain" description="UVR" evidence="1">
    <location>
        <begin position="208"/>
        <end position="243"/>
    </location>
</feature>
<feature type="region of interest" description="Disordered" evidence="2">
    <location>
        <begin position="470"/>
        <end position="507"/>
    </location>
</feature>
<feature type="compositionally biased region" description="Low complexity" evidence="2">
    <location>
        <begin position="475"/>
        <end position="491"/>
    </location>
</feature>
<accession>A4X9H1</accession>
<organism>
    <name type="scientific">Salinispora tropica (strain ATCC BAA-916 / DSM 44818 / JCM 13857 / NBRC 105044 / CNB-440)</name>
    <dbReference type="NCBI Taxonomy" id="369723"/>
    <lineage>
        <taxon>Bacteria</taxon>
        <taxon>Bacillati</taxon>
        <taxon>Actinomycetota</taxon>
        <taxon>Actinomycetes</taxon>
        <taxon>Micromonosporales</taxon>
        <taxon>Micromonosporaceae</taxon>
        <taxon>Salinispora</taxon>
    </lineage>
</organism>
<sequence length="665" mass="73708">MADPSSYRPAPGTIPESPGVYRFRDGTGRVIYVGKARNLRNRLNSYFADPVNLHQRTRQMVFTAESVDWISVATEVEALQQEFTEIKQYDPRFNVRYRDDKSYPYLAVTVSEEFPRLQVMRGAKRKGVRYFGPYSHAWAIRETLDLLLRVFPARTCSSGVFKRAGQVGRPCLLGYIDKCAAPCVGSVSAEEHRAIVEGFCDFMAGRTDLMVRRLEREMADASAELEFERAARLRDDLAALRRAMEKQTVVFGDGTDADVVAFADDPLEAAVQVFHVRDGRIRGQRGWVVEKTEELTIGDLVHHFCTQVYGGEQGEADVPRELLVPELPADVEALADWLSDHRGSRVTLRVPQRGDKRALLETVARNATDALARHKLKRAGDLTTRSKALDEIAETLGLQTAPLRIECYDISQIQGTDVVASMVVFEDGLPRKSEYRRFIIRGATDDLSAMSEVLRRRFARYLDARAETGEAGVESAGDPATPAGPASTGPGVPDEPRVGTLVDPTTGRPRKFAYPPQLVVVDGGAPQVAAAAQALAELGVDDVALCGLAKRLEEVWLPDDDFPAILPRTSEGLYLLQRVRDEAHRFAITFHRQRRSRRMTESALDRVPGLGEVRRKALLRHFGSLKRLSAASVEEITEVPGVGQRTAEAILAALGDSTQPDEPRT</sequence>
<protein>
    <recommendedName>
        <fullName evidence="1">UvrABC system protein C</fullName>
        <shortName evidence="1">Protein UvrC</shortName>
    </recommendedName>
    <alternativeName>
        <fullName evidence="1">Excinuclease ABC subunit C</fullName>
    </alternativeName>
</protein>